<reference key="1">
    <citation type="journal article" date="1995" name="Science">
        <title>Whole-genome random sequencing and assembly of Haemophilus influenzae Rd.</title>
        <authorList>
            <person name="Fleischmann R.D."/>
            <person name="Adams M.D."/>
            <person name="White O."/>
            <person name="Clayton R.A."/>
            <person name="Kirkness E.F."/>
            <person name="Kerlavage A.R."/>
            <person name="Bult C.J."/>
            <person name="Tomb J.-F."/>
            <person name="Dougherty B.A."/>
            <person name="Merrick J.M."/>
            <person name="McKenney K."/>
            <person name="Sutton G.G."/>
            <person name="FitzHugh W."/>
            <person name="Fields C.A."/>
            <person name="Gocayne J.D."/>
            <person name="Scott J.D."/>
            <person name="Shirley R."/>
            <person name="Liu L.-I."/>
            <person name="Glodek A."/>
            <person name="Kelley J.M."/>
            <person name="Weidman J.F."/>
            <person name="Phillips C.A."/>
            <person name="Spriggs T."/>
            <person name="Hedblom E."/>
            <person name="Cotton M.D."/>
            <person name="Utterback T.R."/>
            <person name="Hanna M.C."/>
            <person name="Nguyen D.T."/>
            <person name="Saudek D.M."/>
            <person name="Brandon R.C."/>
            <person name="Fine L.D."/>
            <person name="Fritchman J.L."/>
            <person name="Fuhrmann J.L."/>
            <person name="Geoghagen N.S.M."/>
            <person name="Gnehm C.L."/>
            <person name="McDonald L.A."/>
            <person name="Small K.V."/>
            <person name="Fraser C.M."/>
            <person name="Smith H.O."/>
            <person name="Venter J.C."/>
        </authorList>
    </citation>
    <scope>NUCLEOTIDE SEQUENCE [LARGE SCALE GENOMIC DNA]</scope>
    <source>
        <strain>ATCC 51907 / DSM 11121 / KW20 / Rd</strain>
    </source>
</reference>
<reference key="2">
    <citation type="journal article" date="2000" name="Electrophoresis">
        <title>Two-dimensional map of the proteome of Haemophilus influenzae.</title>
        <authorList>
            <person name="Langen H."/>
            <person name="Takacs B."/>
            <person name="Evers S."/>
            <person name="Berndt P."/>
            <person name="Lahm H.W."/>
            <person name="Wipf B."/>
            <person name="Gray C."/>
            <person name="Fountoulakis M."/>
        </authorList>
    </citation>
    <scope>PROTEIN SEQUENCE OF 1-7</scope>
    <source>
        <strain>ATCC 51907 / DSM 11121 / KW20 / Rd</strain>
    </source>
</reference>
<protein>
    <recommendedName>
        <fullName evidence="1">Ribosome-recycling factor</fullName>
        <shortName evidence="1">RRF</shortName>
    </recommendedName>
    <alternativeName>
        <fullName evidence="1">Ribosome-releasing factor</fullName>
    </alternativeName>
</protein>
<name>RRF_HAEIN</name>
<keyword id="KW-0963">Cytoplasm</keyword>
<keyword id="KW-0903">Direct protein sequencing</keyword>
<keyword id="KW-0648">Protein biosynthesis</keyword>
<keyword id="KW-1185">Reference proteome</keyword>
<proteinExistence type="evidence at protein level"/>
<comment type="function">
    <text evidence="1">Responsible for the release of ribosomes from messenger RNA at the termination of protein biosynthesis. May increase the efficiency of translation by recycling ribosomes from one round of translation to another.</text>
</comment>
<comment type="subcellular location">
    <subcellularLocation>
        <location evidence="1">Cytoplasm</location>
    </subcellularLocation>
</comment>
<comment type="similarity">
    <text evidence="1">Belongs to the RRF family.</text>
</comment>
<accession>P44307</accession>
<feature type="chain" id="PRO_0000167468" description="Ribosome-recycling factor">
    <location>
        <begin position="1"/>
        <end position="185"/>
    </location>
</feature>
<sequence>MLNQIKKDAQDRMEKSLEALKGHISKIRTGRAQPSLLDAIQVEYYGAATPLRQLANVVAEDARTLAVTVFDRSLISAVEKAILTSDLGLNPSSAGTTIRVPLPPLTEERRRDLIKIVKGEGEQGKVAVRNVRRDANDKIKALLKDKEISENEQHKAEEEIQKITDIYIKKVDEVLADKEKELMDF</sequence>
<evidence type="ECO:0000255" key="1">
    <source>
        <dbReference type="HAMAP-Rule" id="MF_00040"/>
    </source>
</evidence>
<dbReference type="EMBL" id="L42023">
    <property type="protein sequence ID" value="AAC22467.1"/>
    <property type="molecule type" value="Genomic_DNA"/>
</dbReference>
<dbReference type="PIR" id="D64095">
    <property type="entry name" value="D64095"/>
</dbReference>
<dbReference type="RefSeq" id="NP_438968.1">
    <property type="nucleotide sequence ID" value="NC_000907.1"/>
</dbReference>
<dbReference type="SMR" id="P44307"/>
<dbReference type="STRING" id="71421.HI_0808"/>
<dbReference type="EnsemblBacteria" id="AAC22467">
    <property type="protein sequence ID" value="AAC22467"/>
    <property type="gene ID" value="HI_0808"/>
</dbReference>
<dbReference type="KEGG" id="hin:HI_0808"/>
<dbReference type="PATRIC" id="fig|71421.8.peg.849"/>
<dbReference type="eggNOG" id="COG0233">
    <property type="taxonomic scope" value="Bacteria"/>
</dbReference>
<dbReference type="HOGENOM" id="CLU_073981_2_1_6"/>
<dbReference type="OrthoDB" id="9804006at2"/>
<dbReference type="PhylomeDB" id="P44307"/>
<dbReference type="BioCyc" id="HINF71421:G1GJ1-849-MONOMER"/>
<dbReference type="Proteomes" id="UP000000579">
    <property type="component" value="Chromosome"/>
</dbReference>
<dbReference type="GO" id="GO:0005737">
    <property type="term" value="C:cytoplasm"/>
    <property type="evidence" value="ECO:0000318"/>
    <property type="project" value="GO_Central"/>
</dbReference>
<dbReference type="GO" id="GO:0005829">
    <property type="term" value="C:cytosol"/>
    <property type="evidence" value="ECO:0007669"/>
    <property type="project" value="GOC"/>
</dbReference>
<dbReference type="GO" id="GO:0043023">
    <property type="term" value="F:ribosomal large subunit binding"/>
    <property type="evidence" value="ECO:0000318"/>
    <property type="project" value="GO_Central"/>
</dbReference>
<dbReference type="GO" id="GO:0002184">
    <property type="term" value="P:cytoplasmic translational termination"/>
    <property type="evidence" value="ECO:0000318"/>
    <property type="project" value="GO_Central"/>
</dbReference>
<dbReference type="GO" id="GO:0006412">
    <property type="term" value="P:translation"/>
    <property type="evidence" value="ECO:0000318"/>
    <property type="project" value="GO_Central"/>
</dbReference>
<dbReference type="CDD" id="cd00520">
    <property type="entry name" value="RRF"/>
    <property type="match status" value="1"/>
</dbReference>
<dbReference type="FunFam" id="1.10.132.20:FF:000001">
    <property type="entry name" value="Ribosome-recycling factor"/>
    <property type="match status" value="1"/>
</dbReference>
<dbReference type="FunFam" id="3.30.1360.40:FF:000001">
    <property type="entry name" value="Ribosome-recycling factor"/>
    <property type="match status" value="1"/>
</dbReference>
<dbReference type="Gene3D" id="3.30.1360.40">
    <property type="match status" value="1"/>
</dbReference>
<dbReference type="Gene3D" id="1.10.132.20">
    <property type="entry name" value="Ribosome-recycling factor"/>
    <property type="match status" value="1"/>
</dbReference>
<dbReference type="HAMAP" id="MF_00040">
    <property type="entry name" value="RRF"/>
    <property type="match status" value="1"/>
</dbReference>
<dbReference type="InterPro" id="IPR002661">
    <property type="entry name" value="Ribosome_recyc_fac"/>
</dbReference>
<dbReference type="InterPro" id="IPR023584">
    <property type="entry name" value="Ribosome_recyc_fac_dom"/>
</dbReference>
<dbReference type="InterPro" id="IPR036191">
    <property type="entry name" value="RRF_sf"/>
</dbReference>
<dbReference type="NCBIfam" id="TIGR00496">
    <property type="entry name" value="frr"/>
    <property type="match status" value="1"/>
</dbReference>
<dbReference type="PANTHER" id="PTHR20982:SF3">
    <property type="entry name" value="MITOCHONDRIAL RIBOSOME RECYCLING FACTOR PSEUDO 1"/>
    <property type="match status" value="1"/>
</dbReference>
<dbReference type="PANTHER" id="PTHR20982">
    <property type="entry name" value="RIBOSOME RECYCLING FACTOR"/>
    <property type="match status" value="1"/>
</dbReference>
<dbReference type="Pfam" id="PF01765">
    <property type="entry name" value="RRF"/>
    <property type="match status" value="1"/>
</dbReference>
<dbReference type="SUPFAM" id="SSF55194">
    <property type="entry name" value="Ribosome recycling factor, RRF"/>
    <property type="match status" value="1"/>
</dbReference>
<gene>
    <name evidence="1" type="primary">frr</name>
    <name type="ordered locus">HI_0808</name>
</gene>
<organism>
    <name type="scientific">Haemophilus influenzae (strain ATCC 51907 / DSM 11121 / KW20 / Rd)</name>
    <dbReference type="NCBI Taxonomy" id="71421"/>
    <lineage>
        <taxon>Bacteria</taxon>
        <taxon>Pseudomonadati</taxon>
        <taxon>Pseudomonadota</taxon>
        <taxon>Gammaproteobacteria</taxon>
        <taxon>Pasteurellales</taxon>
        <taxon>Pasteurellaceae</taxon>
        <taxon>Haemophilus</taxon>
    </lineage>
</organism>